<accession>B2G6E5</accession>
<name>MUTS_LIMRJ</name>
<evidence type="ECO:0000255" key="1">
    <source>
        <dbReference type="HAMAP-Rule" id="MF_00096"/>
    </source>
</evidence>
<proteinExistence type="inferred from homology"/>
<reference key="1">
    <citation type="journal article" date="2008" name="DNA Res.">
        <title>Comparative genome analysis of Lactobacillus reuteri and Lactobacillus fermentum reveal a genomic island for reuterin and cobalamin production.</title>
        <authorList>
            <person name="Morita H."/>
            <person name="Toh H."/>
            <person name="Fukuda S."/>
            <person name="Horikawa H."/>
            <person name="Oshima K."/>
            <person name="Suzuki T."/>
            <person name="Murakami M."/>
            <person name="Hisamatsu S."/>
            <person name="Kato Y."/>
            <person name="Takizawa T."/>
            <person name="Fukuoka H."/>
            <person name="Yoshimura T."/>
            <person name="Itoh K."/>
            <person name="O'Sullivan D.J."/>
            <person name="McKay L.L."/>
            <person name="Ohno H."/>
            <person name="Kikuchi J."/>
            <person name="Masaoka T."/>
            <person name="Hattori M."/>
        </authorList>
    </citation>
    <scope>NUCLEOTIDE SEQUENCE [LARGE SCALE GENOMIC DNA]</scope>
    <source>
        <strain>JCM 1112</strain>
    </source>
</reference>
<comment type="function">
    <text evidence="1">This protein is involved in the repair of mismatches in DNA. It is possible that it carries out the mismatch recognition step. This protein has a weak ATPase activity.</text>
</comment>
<comment type="similarity">
    <text evidence="1">Belongs to the DNA mismatch repair MutS family.</text>
</comment>
<gene>
    <name evidence="1" type="primary">mutS</name>
    <name type="ordered locus">LAR_0511</name>
</gene>
<feature type="chain" id="PRO_1000093633" description="DNA mismatch repair protein MutS">
    <location>
        <begin position="1"/>
        <end position="881"/>
    </location>
</feature>
<feature type="binding site" evidence="1">
    <location>
        <begin position="605"/>
        <end position="612"/>
    </location>
    <ligand>
        <name>ATP</name>
        <dbReference type="ChEBI" id="CHEBI:30616"/>
    </ligand>
</feature>
<keyword id="KW-0067">ATP-binding</keyword>
<keyword id="KW-0227">DNA damage</keyword>
<keyword id="KW-0234">DNA repair</keyword>
<keyword id="KW-0238">DNA-binding</keyword>
<keyword id="KW-0547">Nucleotide-binding</keyword>
<organism>
    <name type="scientific">Limosilactobacillus reuteri subsp. reuteri (strain JCM 1112)</name>
    <name type="common">Lactobacillus reuteri</name>
    <dbReference type="NCBI Taxonomy" id="557433"/>
    <lineage>
        <taxon>Bacteria</taxon>
        <taxon>Bacillati</taxon>
        <taxon>Bacillota</taxon>
        <taxon>Bacilli</taxon>
        <taxon>Lactobacillales</taxon>
        <taxon>Lactobacillaceae</taxon>
        <taxon>Limosilactobacillus</taxon>
    </lineage>
</organism>
<dbReference type="EMBL" id="AP007281">
    <property type="protein sequence ID" value="BAG25027.1"/>
    <property type="molecule type" value="Genomic_DNA"/>
</dbReference>
<dbReference type="RefSeq" id="WP_003667622.1">
    <property type="nucleotide sequence ID" value="NC_010609.1"/>
</dbReference>
<dbReference type="SMR" id="B2G6E5"/>
<dbReference type="KEGG" id="lrf:LAR_0511"/>
<dbReference type="HOGENOM" id="CLU_002472_3_2_9"/>
<dbReference type="GO" id="GO:0005829">
    <property type="term" value="C:cytosol"/>
    <property type="evidence" value="ECO:0007669"/>
    <property type="project" value="TreeGrafter"/>
</dbReference>
<dbReference type="GO" id="GO:0005524">
    <property type="term" value="F:ATP binding"/>
    <property type="evidence" value="ECO:0007669"/>
    <property type="project" value="UniProtKB-UniRule"/>
</dbReference>
<dbReference type="GO" id="GO:0140664">
    <property type="term" value="F:ATP-dependent DNA damage sensor activity"/>
    <property type="evidence" value="ECO:0007669"/>
    <property type="project" value="InterPro"/>
</dbReference>
<dbReference type="GO" id="GO:0003684">
    <property type="term" value="F:damaged DNA binding"/>
    <property type="evidence" value="ECO:0007669"/>
    <property type="project" value="UniProtKB-UniRule"/>
</dbReference>
<dbReference type="GO" id="GO:0030983">
    <property type="term" value="F:mismatched DNA binding"/>
    <property type="evidence" value="ECO:0007669"/>
    <property type="project" value="InterPro"/>
</dbReference>
<dbReference type="GO" id="GO:0006298">
    <property type="term" value="P:mismatch repair"/>
    <property type="evidence" value="ECO:0007669"/>
    <property type="project" value="UniProtKB-UniRule"/>
</dbReference>
<dbReference type="CDD" id="cd03284">
    <property type="entry name" value="ABC_MutS1"/>
    <property type="match status" value="1"/>
</dbReference>
<dbReference type="FunFam" id="1.10.1420.10:FF:000007">
    <property type="entry name" value="DNA mismatch repair protein MutS"/>
    <property type="match status" value="1"/>
</dbReference>
<dbReference type="FunFam" id="3.40.1170.10:FF:000001">
    <property type="entry name" value="DNA mismatch repair protein MutS"/>
    <property type="match status" value="1"/>
</dbReference>
<dbReference type="FunFam" id="3.40.50.300:FF:000896">
    <property type="entry name" value="DNA mismatch repair protein MutS"/>
    <property type="match status" value="1"/>
</dbReference>
<dbReference type="Gene3D" id="1.10.1420.10">
    <property type="match status" value="2"/>
</dbReference>
<dbReference type="Gene3D" id="3.40.1170.10">
    <property type="entry name" value="DNA repair protein MutS, domain I"/>
    <property type="match status" value="1"/>
</dbReference>
<dbReference type="Gene3D" id="3.30.420.110">
    <property type="entry name" value="MutS, connector domain"/>
    <property type="match status" value="1"/>
</dbReference>
<dbReference type="Gene3D" id="3.40.50.300">
    <property type="entry name" value="P-loop containing nucleotide triphosphate hydrolases"/>
    <property type="match status" value="1"/>
</dbReference>
<dbReference type="HAMAP" id="MF_00096">
    <property type="entry name" value="MutS"/>
    <property type="match status" value="1"/>
</dbReference>
<dbReference type="InterPro" id="IPR005748">
    <property type="entry name" value="DNA_mismatch_repair_MutS"/>
</dbReference>
<dbReference type="InterPro" id="IPR007695">
    <property type="entry name" value="DNA_mismatch_repair_MutS-lik_N"/>
</dbReference>
<dbReference type="InterPro" id="IPR017261">
    <property type="entry name" value="DNA_mismatch_repair_MutS/MSH"/>
</dbReference>
<dbReference type="InterPro" id="IPR000432">
    <property type="entry name" value="DNA_mismatch_repair_MutS_C"/>
</dbReference>
<dbReference type="InterPro" id="IPR007861">
    <property type="entry name" value="DNA_mismatch_repair_MutS_clamp"/>
</dbReference>
<dbReference type="InterPro" id="IPR007696">
    <property type="entry name" value="DNA_mismatch_repair_MutS_core"/>
</dbReference>
<dbReference type="InterPro" id="IPR016151">
    <property type="entry name" value="DNA_mismatch_repair_MutS_N"/>
</dbReference>
<dbReference type="InterPro" id="IPR036187">
    <property type="entry name" value="DNA_mismatch_repair_MutS_sf"/>
</dbReference>
<dbReference type="InterPro" id="IPR007860">
    <property type="entry name" value="DNA_mmatch_repair_MutS_con_dom"/>
</dbReference>
<dbReference type="InterPro" id="IPR045076">
    <property type="entry name" value="MutS"/>
</dbReference>
<dbReference type="InterPro" id="IPR036678">
    <property type="entry name" value="MutS_con_dom_sf"/>
</dbReference>
<dbReference type="InterPro" id="IPR027417">
    <property type="entry name" value="P-loop_NTPase"/>
</dbReference>
<dbReference type="NCBIfam" id="TIGR01070">
    <property type="entry name" value="mutS1"/>
    <property type="match status" value="1"/>
</dbReference>
<dbReference type="NCBIfam" id="NF003810">
    <property type="entry name" value="PRK05399.1"/>
    <property type="match status" value="1"/>
</dbReference>
<dbReference type="PANTHER" id="PTHR11361:SF34">
    <property type="entry name" value="DNA MISMATCH REPAIR PROTEIN MSH1, MITOCHONDRIAL"/>
    <property type="match status" value="1"/>
</dbReference>
<dbReference type="PANTHER" id="PTHR11361">
    <property type="entry name" value="DNA MISMATCH REPAIR PROTEIN MUTS FAMILY MEMBER"/>
    <property type="match status" value="1"/>
</dbReference>
<dbReference type="Pfam" id="PF01624">
    <property type="entry name" value="MutS_I"/>
    <property type="match status" value="1"/>
</dbReference>
<dbReference type="Pfam" id="PF05188">
    <property type="entry name" value="MutS_II"/>
    <property type="match status" value="1"/>
</dbReference>
<dbReference type="Pfam" id="PF05192">
    <property type="entry name" value="MutS_III"/>
    <property type="match status" value="1"/>
</dbReference>
<dbReference type="Pfam" id="PF05190">
    <property type="entry name" value="MutS_IV"/>
    <property type="match status" value="1"/>
</dbReference>
<dbReference type="Pfam" id="PF00488">
    <property type="entry name" value="MutS_V"/>
    <property type="match status" value="1"/>
</dbReference>
<dbReference type="PIRSF" id="PIRSF037677">
    <property type="entry name" value="DNA_mis_repair_Msh6"/>
    <property type="match status" value="1"/>
</dbReference>
<dbReference type="SMART" id="SM00534">
    <property type="entry name" value="MUTSac"/>
    <property type="match status" value="1"/>
</dbReference>
<dbReference type="SMART" id="SM00533">
    <property type="entry name" value="MUTSd"/>
    <property type="match status" value="1"/>
</dbReference>
<dbReference type="SUPFAM" id="SSF55271">
    <property type="entry name" value="DNA repair protein MutS, domain I"/>
    <property type="match status" value="1"/>
</dbReference>
<dbReference type="SUPFAM" id="SSF53150">
    <property type="entry name" value="DNA repair protein MutS, domain II"/>
    <property type="match status" value="1"/>
</dbReference>
<dbReference type="SUPFAM" id="SSF48334">
    <property type="entry name" value="DNA repair protein MutS, domain III"/>
    <property type="match status" value="1"/>
</dbReference>
<dbReference type="SUPFAM" id="SSF52540">
    <property type="entry name" value="P-loop containing nucleoside triphosphate hydrolases"/>
    <property type="match status" value="1"/>
</dbReference>
<dbReference type="PROSITE" id="PS00486">
    <property type="entry name" value="DNA_MISMATCH_REPAIR_2"/>
    <property type="match status" value="1"/>
</dbReference>
<sequence>MAKKTTPMMEQYQKVKDQYPDAFLFYRLGDFYELFNDDAVKGAQLLELTLTTRNHSAKNPIPMCGVPHRAVNNYIDILIDKGYKVAICEQMEDPKKAKGMVKRAVTRLITPGTQMDLNGEQARDNNYLAAISGQNGVFSIAYTDLSTGELKTTSLNNANDAVNELVNLQSKEVVVDGELPVEITTQFKQRNILQSHQPTVLKNAEISYLTQDLDDQAQQHVVALLVSYLLTTQKRSLAHMQKAIAYQPSSFMKIDHYSKTNLELMRNMRSGKRQGTLAWLLDETKTAMGSRLLKRWIDRPLINQNAISERQDKVQELLDHYFERSNLQQELIKVYDLERLAGRVAYGSVNGRDLIQLKTSLKQVPKIKYVLETLDSPVFEELQKQLDPLDDVADLIDQSIIEEPPIAVTEGGVIKDGYNDQLDQYRDAMNNGKQWIVDLQEHERKLTGINNLKIGYNHVFGYYIEVTKVNLDKLPKDRYERKQTLVNAERFSTPELKEKEALIMGAQEKSTALEYDIFVKIREQVKGQITRLQKLAQQLAELDVLQSFAVVSEDYHFVRPEMNTGHVLKIKDGRHPVVEKFMGHQEYVPNDVLMGEDTDILLITGPNMSGKSTYMRQLALIAVMAQIGCFVPAKSAELPIFDQVFTRIGAADDLISGESTFMVEMMEANNALTHATDRSLILFDEIGRGTATYDGMALAQAIIEYVHQHVRAKTLFSTHYHELTALENSLARLKNVHVGATEKDGELVFLHKVSAGPADKSYGIHVAKLAGMPSSLLKRADTILQKLEQKDVKLPNTPKPATDNYHTEPISAKINEAAPVKKEAAPVVEDNGQLELFATQPEKKESSVDRRILHQLKELNLMGMTPMDVMNQIYKWQQKLK</sequence>
<protein>
    <recommendedName>
        <fullName evidence="1">DNA mismatch repair protein MutS</fullName>
    </recommendedName>
</protein>